<name>RPOB_KARMG</name>
<accession>A8Z5T3</accession>
<comment type="function">
    <text evidence="1">DNA-dependent RNA polymerase catalyzes the transcription of DNA into RNA using the four ribonucleoside triphosphates as substrates.</text>
</comment>
<comment type="catalytic activity">
    <reaction evidence="1">
        <text>RNA(n) + a ribonucleoside 5'-triphosphate = RNA(n+1) + diphosphate</text>
        <dbReference type="Rhea" id="RHEA:21248"/>
        <dbReference type="Rhea" id="RHEA-COMP:14527"/>
        <dbReference type="Rhea" id="RHEA-COMP:17342"/>
        <dbReference type="ChEBI" id="CHEBI:33019"/>
        <dbReference type="ChEBI" id="CHEBI:61557"/>
        <dbReference type="ChEBI" id="CHEBI:140395"/>
        <dbReference type="EC" id="2.7.7.6"/>
    </reaction>
</comment>
<comment type="subunit">
    <text evidence="1">The RNAP catalytic core consists of 2 alpha, 1 beta, 1 beta' and 1 omega subunit. When a sigma factor is associated with the core the holoenzyme is formed, which can initiate transcription.</text>
</comment>
<comment type="similarity">
    <text evidence="1">Belongs to the RNA polymerase beta chain family.</text>
</comment>
<sequence>MKKIIKIRRFKFPFTKEKTINFASVRNKISYPDFLDIQIKSFTNFFCINYTYKNISNKGFYKVFIEYFPISDSKNKFIIDFISYKIYDPLYSIEECIKRGLTYNVYIRARFKIYRTRKRKITIENKRTKYFETIYQDVYFGTCPYMTPSGSFIFNGSERVIVSQLHRSPGVFFGQYDIPNLPKISYARIIPLKGSWIELSTDINNVMYIYLDIKKRLPITTLLRALGYTRDIDILNIFNLAEEVNINKVNYKKFLGRTLAARIFKTSYQKFEENDILLERNIKLKKYHIDIILYYKIKVISLYKKNEKNEKNLYYSIIHNTLKKDPTNSQKEANIYIYKELKDSFPKNDKKAKLFINKFFFDETHLGEVGRYKLNKTLKLDFPLKDQILNIEDIISIIENLIALCNNKKEVDDIDNLANRRVKTVGEQLYTQYTIGIARVSRIIKERINVKDNETLTPLELINSKTLTSVINSFFGTDELSQFMDQTNPLAEMTHKRRISSLGPGGLSRERAGFEIRDVNYSHYGRLCPIETPEGPNIGLISSLCVFAKINSMGFIETPYFKVKKGKVVINEAPIYISSDQEYGKLITQANAILNYKTGVLKNNIIVRVNADFPMVNYKKINYIDVSTNQIASISASLIPFLEHDDANRALMGSNMMRQSVPLLNPKAPIVGTGLEKHLAQYVNALIYAEGDGIVESVDANNIKVKYFNSEKEKLLSFEKRIKTYKLIKFRKTNQNTCLNIRPIVKKGMYVTKGQVLCEGFATQNGKLALGRNIKVAFMPFKGYNFEDAIVISEKVVREDWFTSIHIDEYSLEVRDTKLGMEEFTFDIPNFNEENKKKLDKYGIIKIGSEVKPGDVLIGRITPKKEGYPSSEENFLKAIFGKKVGTIKNTSLKADSSLFGVVIDTKIYSKFSSKEDEQKQFQIKKLNNKFMKNLKLLRKLLINKLILVLEGSVSEGILNSSYKEIIPKGKILNKLNLKKLLKNQEIIYQNWVNNKYKNNLVFKIIKFYYLKINELKIKLKRKKNRLLIGDEITSGIIKIAKVLIAKKRKLKVGDKMSGRHGNKGIVARIVKEEDMPYLEDGTSVDLVLNPLGVPSRMNLGQIYETILGWAGEKLGINFSTPIFDGASIEEISKYTDIANLPSFGNTYLFDGETGEKFDQPVTVGVIYMLKLNHMVDDKMHARSIGPYSLITQQPLGGKSKFGGQRLGEMEVWALEAFGAANILREILTVKSDDVKGRTKTYEAIVKRETIPNPGIPESFHVLLKELKGLGLSLKLEVIKKKEKKNQKIKVRIEIKEKDIIKYKKKVKEIKLKKLKELKEQLSKSNKKK</sequence>
<evidence type="ECO:0000255" key="1">
    <source>
        <dbReference type="HAMAP-Rule" id="MF_01321"/>
    </source>
</evidence>
<keyword id="KW-0240">DNA-directed RNA polymerase</keyword>
<keyword id="KW-0548">Nucleotidyltransferase</keyword>
<keyword id="KW-0804">Transcription</keyword>
<keyword id="KW-0808">Transferase</keyword>
<gene>
    <name evidence="1" type="primary">rpoB</name>
    <name type="ordered locus">SMGWSS_057</name>
</gene>
<protein>
    <recommendedName>
        <fullName evidence="1">DNA-directed RNA polymerase subunit beta</fullName>
        <shortName evidence="1">RNAP subunit beta</shortName>
        <ecNumber evidence="1">2.7.7.6</ecNumber>
    </recommendedName>
    <alternativeName>
        <fullName evidence="1">RNA polymerase subunit beta</fullName>
    </alternativeName>
    <alternativeName>
        <fullName evidence="1">Transcriptase subunit beta</fullName>
    </alternativeName>
</protein>
<organism>
    <name type="scientific">Karelsulcia muelleri (strain GWSS)</name>
    <name type="common">Sulcia muelleri</name>
    <dbReference type="NCBI Taxonomy" id="444179"/>
    <lineage>
        <taxon>Bacteria</taxon>
        <taxon>Pseudomonadati</taxon>
        <taxon>Bacteroidota</taxon>
        <taxon>Flavobacteriia</taxon>
        <taxon>Flavobacteriales</taxon>
        <taxon>Candidatus Karelsulcia</taxon>
    </lineage>
</organism>
<reference key="1">
    <citation type="journal article" date="2007" name="Proc. Natl. Acad. Sci. U.S.A.">
        <title>Parallel genomic evolution and metabolic interdependence in an ancient symbiosis.</title>
        <authorList>
            <person name="McCutcheon J.P."/>
            <person name="Moran N.A."/>
        </authorList>
    </citation>
    <scope>NUCLEOTIDE SEQUENCE [LARGE SCALE GENOMIC DNA]</scope>
    <source>
        <strain>GWSS</strain>
    </source>
</reference>
<dbReference type="EC" id="2.7.7.6" evidence="1"/>
<dbReference type="EMBL" id="CP000770">
    <property type="protein sequence ID" value="ABS30484.1"/>
    <property type="molecule type" value="Genomic_DNA"/>
</dbReference>
<dbReference type="SMR" id="A8Z5T3"/>
<dbReference type="STRING" id="444179.SMGWSS_057"/>
<dbReference type="KEGG" id="smg:SMGWSS_057"/>
<dbReference type="HOGENOM" id="CLU_000524_4_0_10"/>
<dbReference type="Proteomes" id="UP000000781">
    <property type="component" value="Chromosome"/>
</dbReference>
<dbReference type="GO" id="GO:0000428">
    <property type="term" value="C:DNA-directed RNA polymerase complex"/>
    <property type="evidence" value="ECO:0007669"/>
    <property type="project" value="UniProtKB-KW"/>
</dbReference>
<dbReference type="GO" id="GO:0003677">
    <property type="term" value="F:DNA binding"/>
    <property type="evidence" value="ECO:0007669"/>
    <property type="project" value="UniProtKB-UniRule"/>
</dbReference>
<dbReference type="GO" id="GO:0003899">
    <property type="term" value="F:DNA-directed RNA polymerase activity"/>
    <property type="evidence" value="ECO:0007669"/>
    <property type="project" value="UniProtKB-UniRule"/>
</dbReference>
<dbReference type="GO" id="GO:0032549">
    <property type="term" value="F:ribonucleoside binding"/>
    <property type="evidence" value="ECO:0007669"/>
    <property type="project" value="InterPro"/>
</dbReference>
<dbReference type="GO" id="GO:0006351">
    <property type="term" value="P:DNA-templated transcription"/>
    <property type="evidence" value="ECO:0007669"/>
    <property type="project" value="UniProtKB-UniRule"/>
</dbReference>
<dbReference type="CDD" id="cd00653">
    <property type="entry name" value="RNA_pol_B_RPB2"/>
    <property type="match status" value="1"/>
</dbReference>
<dbReference type="Gene3D" id="2.40.50.100">
    <property type="match status" value="1"/>
</dbReference>
<dbReference type="Gene3D" id="2.40.50.150">
    <property type="match status" value="1"/>
</dbReference>
<dbReference type="Gene3D" id="3.90.1100.10">
    <property type="match status" value="2"/>
</dbReference>
<dbReference type="Gene3D" id="2.30.150.10">
    <property type="entry name" value="DNA-directed RNA polymerase, beta subunit, external 1 domain"/>
    <property type="match status" value="1"/>
</dbReference>
<dbReference type="Gene3D" id="2.40.270.10">
    <property type="entry name" value="DNA-directed RNA polymerase, subunit 2, domain 6"/>
    <property type="match status" value="3"/>
</dbReference>
<dbReference type="Gene3D" id="3.90.1800.10">
    <property type="entry name" value="RNA polymerase alpha subunit dimerisation domain"/>
    <property type="match status" value="1"/>
</dbReference>
<dbReference type="Gene3D" id="3.90.1110.10">
    <property type="entry name" value="RNA polymerase Rpb2, domain 2"/>
    <property type="match status" value="2"/>
</dbReference>
<dbReference type="HAMAP" id="MF_01321">
    <property type="entry name" value="RNApol_bact_RpoB"/>
    <property type="match status" value="1"/>
</dbReference>
<dbReference type="InterPro" id="IPR042107">
    <property type="entry name" value="DNA-dir_RNA_pol_bsu_ext_1_sf"/>
</dbReference>
<dbReference type="InterPro" id="IPR019462">
    <property type="entry name" value="DNA-dir_RNA_pol_bsu_external_1"/>
</dbReference>
<dbReference type="InterPro" id="IPR015712">
    <property type="entry name" value="DNA-dir_RNA_pol_su2"/>
</dbReference>
<dbReference type="InterPro" id="IPR007120">
    <property type="entry name" value="DNA-dir_RNAP_su2_dom"/>
</dbReference>
<dbReference type="InterPro" id="IPR037033">
    <property type="entry name" value="DNA-dir_RNAP_su2_hyb_sf"/>
</dbReference>
<dbReference type="InterPro" id="IPR010243">
    <property type="entry name" value="RNA_pol_bsu_bac"/>
</dbReference>
<dbReference type="InterPro" id="IPR007121">
    <property type="entry name" value="RNA_pol_bsu_CS"/>
</dbReference>
<dbReference type="InterPro" id="IPR007644">
    <property type="entry name" value="RNA_pol_bsu_protrusion"/>
</dbReference>
<dbReference type="InterPro" id="IPR007642">
    <property type="entry name" value="RNA_pol_Rpb2_2"/>
</dbReference>
<dbReference type="InterPro" id="IPR037034">
    <property type="entry name" value="RNA_pol_Rpb2_2_sf"/>
</dbReference>
<dbReference type="InterPro" id="IPR007645">
    <property type="entry name" value="RNA_pol_Rpb2_3"/>
</dbReference>
<dbReference type="InterPro" id="IPR007641">
    <property type="entry name" value="RNA_pol_Rpb2_7"/>
</dbReference>
<dbReference type="InterPro" id="IPR014724">
    <property type="entry name" value="RNA_pol_RPB2_OB-fold"/>
</dbReference>
<dbReference type="NCBIfam" id="NF001616">
    <property type="entry name" value="PRK00405.1"/>
    <property type="match status" value="1"/>
</dbReference>
<dbReference type="NCBIfam" id="TIGR02013">
    <property type="entry name" value="rpoB"/>
    <property type="match status" value="1"/>
</dbReference>
<dbReference type="PANTHER" id="PTHR20856">
    <property type="entry name" value="DNA-DIRECTED RNA POLYMERASE I SUBUNIT 2"/>
    <property type="match status" value="1"/>
</dbReference>
<dbReference type="Pfam" id="PF04563">
    <property type="entry name" value="RNA_pol_Rpb2_1"/>
    <property type="match status" value="1"/>
</dbReference>
<dbReference type="Pfam" id="PF04561">
    <property type="entry name" value="RNA_pol_Rpb2_2"/>
    <property type="match status" value="2"/>
</dbReference>
<dbReference type="Pfam" id="PF04565">
    <property type="entry name" value="RNA_pol_Rpb2_3"/>
    <property type="match status" value="1"/>
</dbReference>
<dbReference type="Pfam" id="PF10385">
    <property type="entry name" value="RNA_pol_Rpb2_45"/>
    <property type="match status" value="1"/>
</dbReference>
<dbReference type="Pfam" id="PF00562">
    <property type="entry name" value="RNA_pol_Rpb2_6"/>
    <property type="match status" value="1"/>
</dbReference>
<dbReference type="Pfam" id="PF04560">
    <property type="entry name" value="RNA_pol_Rpb2_7"/>
    <property type="match status" value="1"/>
</dbReference>
<dbReference type="SUPFAM" id="SSF64484">
    <property type="entry name" value="beta and beta-prime subunits of DNA dependent RNA-polymerase"/>
    <property type="match status" value="1"/>
</dbReference>
<dbReference type="PROSITE" id="PS01166">
    <property type="entry name" value="RNA_POL_BETA"/>
    <property type="match status" value="1"/>
</dbReference>
<proteinExistence type="inferred from homology"/>
<feature type="chain" id="PRO_0000329190" description="DNA-directed RNA polymerase subunit beta">
    <location>
        <begin position="1"/>
        <end position="1328"/>
    </location>
</feature>